<feature type="chain" id="PRO_1000135195" description="Putative transport protein YbjL">
    <location>
        <begin position="1"/>
        <end position="561"/>
    </location>
</feature>
<feature type="transmembrane region" description="Helical" evidence="1">
    <location>
        <begin position="8"/>
        <end position="28"/>
    </location>
</feature>
<feature type="transmembrane region" description="Helical" evidence="1">
    <location>
        <begin position="32"/>
        <end position="52"/>
    </location>
</feature>
<feature type="transmembrane region" description="Helical" evidence="1">
    <location>
        <begin position="66"/>
        <end position="86"/>
    </location>
</feature>
<feature type="transmembrane region" description="Helical" evidence="1">
    <location>
        <begin position="94"/>
        <end position="114"/>
    </location>
</feature>
<feature type="transmembrane region" description="Helical" evidence="1">
    <location>
        <begin position="158"/>
        <end position="178"/>
    </location>
</feature>
<feature type="transmembrane region" description="Helical" evidence="1">
    <location>
        <begin position="383"/>
        <end position="403"/>
    </location>
</feature>
<feature type="transmembrane region" description="Helical" evidence="1">
    <location>
        <begin position="406"/>
        <end position="426"/>
    </location>
</feature>
<feature type="transmembrane region" description="Helical" evidence="1">
    <location>
        <begin position="447"/>
        <end position="467"/>
    </location>
</feature>
<feature type="transmembrane region" description="Helical" evidence="1">
    <location>
        <begin position="475"/>
        <end position="495"/>
    </location>
</feature>
<feature type="transmembrane region" description="Helical" evidence="1">
    <location>
        <begin position="540"/>
        <end position="560"/>
    </location>
</feature>
<feature type="domain" description="RCK C-terminal 1" evidence="1">
    <location>
        <begin position="200"/>
        <end position="288"/>
    </location>
</feature>
<feature type="domain" description="RCK C-terminal 2" evidence="1">
    <location>
        <begin position="292"/>
        <end position="373"/>
    </location>
</feature>
<dbReference type="EMBL" id="FM200053">
    <property type="protein sequence ID" value="CAR59956.1"/>
    <property type="molecule type" value="Genomic_DNA"/>
</dbReference>
<dbReference type="RefSeq" id="WP_001024853.1">
    <property type="nucleotide sequence ID" value="NC_011147.1"/>
</dbReference>
<dbReference type="SMR" id="B5BBW7"/>
<dbReference type="KEGG" id="sek:SSPA1762"/>
<dbReference type="HOGENOM" id="CLU_035023_2_2_6"/>
<dbReference type="Proteomes" id="UP000001869">
    <property type="component" value="Chromosome"/>
</dbReference>
<dbReference type="GO" id="GO:0005886">
    <property type="term" value="C:plasma membrane"/>
    <property type="evidence" value="ECO:0007669"/>
    <property type="project" value="UniProtKB-SubCell"/>
</dbReference>
<dbReference type="GO" id="GO:0008324">
    <property type="term" value="F:monoatomic cation transmembrane transporter activity"/>
    <property type="evidence" value="ECO:0007669"/>
    <property type="project" value="InterPro"/>
</dbReference>
<dbReference type="GO" id="GO:0006813">
    <property type="term" value="P:potassium ion transport"/>
    <property type="evidence" value="ECO:0007669"/>
    <property type="project" value="InterPro"/>
</dbReference>
<dbReference type="FunFam" id="3.30.70.1450:FF:000003">
    <property type="entry name" value="Putative transport protein YbjL"/>
    <property type="match status" value="1"/>
</dbReference>
<dbReference type="Gene3D" id="3.30.70.1450">
    <property type="entry name" value="Regulator of K+ conductance, C-terminal domain"/>
    <property type="match status" value="1"/>
</dbReference>
<dbReference type="HAMAP" id="MF_01015">
    <property type="entry name" value="YbjL"/>
    <property type="match status" value="1"/>
</dbReference>
<dbReference type="InterPro" id="IPR050144">
    <property type="entry name" value="AAE_transporter"/>
</dbReference>
<dbReference type="InterPro" id="IPR006037">
    <property type="entry name" value="RCK_C"/>
</dbReference>
<dbReference type="InterPro" id="IPR036721">
    <property type="entry name" value="RCK_C_sf"/>
</dbReference>
<dbReference type="InterPro" id="IPR023017">
    <property type="entry name" value="Transp_YbjL_put"/>
</dbReference>
<dbReference type="InterPro" id="IPR006512">
    <property type="entry name" value="YidE_YbjL"/>
</dbReference>
<dbReference type="NCBIfam" id="NF003440">
    <property type="entry name" value="PRK04972.1"/>
    <property type="match status" value="1"/>
</dbReference>
<dbReference type="NCBIfam" id="TIGR01625">
    <property type="entry name" value="YidE_YbjL_dupl"/>
    <property type="match status" value="2"/>
</dbReference>
<dbReference type="PANTHER" id="PTHR30445">
    <property type="entry name" value="K(+)_H(+) ANTIPORTER SUBUNIT KHTT"/>
    <property type="match status" value="1"/>
</dbReference>
<dbReference type="PANTHER" id="PTHR30445:SF10">
    <property type="entry name" value="TRANSPORT PROTEIN YBJL-RELATED"/>
    <property type="match status" value="1"/>
</dbReference>
<dbReference type="Pfam" id="PF06826">
    <property type="entry name" value="Asp-Al_Ex"/>
    <property type="match status" value="2"/>
</dbReference>
<dbReference type="Pfam" id="PF02080">
    <property type="entry name" value="TrkA_C"/>
    <property type="match status" value="2"/>
</dbReference>
<dbReference type="SUPFAM" id="SSF116726">
    <property type="entry name" value="TrkA C-terminal domain-like"/>
    <property type="match status" value="2"/>
</dbReference>
<dbReference type="PROSITE" id="PS51202">
    <property type="entry name" value="RCK_C"/>
    <property type="match status" value="2"/>
</dbReference>
<protein>
    <recommendedName>
        <fullName evidence="1">Putative transport protein YbjL</fullName>
    </recommendedName>
</protein>
<evidence type="ECO:0000255" key="1">
    <source>
        <dbReference type="HAMAP-Rule" id="MF_01015"/>
    </source>
</evidence>
<accession>B5BBW7</accession>
<sequence length="561" mass="60181">MNINVADLLNGNYILLLFVVLALGLCLGKLRLGSVQLGNSIGVLVVSLLLGQQHFSINTDALNLGFMLFIFCVGVEAGPNFFSIFFRDGKNYLMLALVMVGSALLIALGLGKLFGWDIGLTAGMLAGSMTSTPVLVGAGDTLRHSGIASTQLSSALDNLSLGYALTYLIGLVSLIVGARYLPKLQHQDLQTSAQQIARERGLDTDANRKVYLPVIRAYRVGPELVAWTDGKNLRELGIYRQTGCYIERIRRNGILANPDGDAVLQMGDEIALVGYPDAHARLDPSFRNGKEVFDRDLLDMRIVTEEIVVKNHNAVGRRLAQLKLTDHGCFLNRVIRSQIEMPIDDNVVLNKGDVLQVSGDARRVKTIADRIGFISIHSQVTDLLAFCAFFIIGLMIGMITFQFSNFSFGIGNAAGLLFAGIMLGFLRANHPTFGYIPQGALNMVKEFGLMVFMAGVGLSAGSGISNGLGAVGGQMLIAGLVVSLVPVVICFLFGAYVLRMNRALLFGAMMGARTCAPAMEIISDTARSNIPALGYAGTYAIANVLLTLAGTLIVIIWPGLG</sequence>
<comment type="subcellular location">
    <subcellularLocation>
        <location evidence="1">Cell membrane</location>
        <topology evidence="1">Multi-pass membrane protein</topology>
    </subcellularLocation>
</comment>
<comment type="similarity">
    <text evidence="1">Belongs to the AAE transporter (TC 2.A.81) family. YbjL subfamily.</text>
</comment>
<reference key="1">
    <citation type="journal article" date="2009" name="BMC Genomics">
        <title>Pseudogene accumulation in the evolutionary histories of Salmonella enterica serovars Paratyphi A and Typhi.</title>
        <authorList>
            <person name="Holt K.E."/>
            <person name="Thomson N.R."/>
            <person name="Wain J."/>
            <person name="Langridge G.C."/>
            <person name="Hasan R."/>
            <person name="Bhutta Z.A."/>
            <person name="Quail M.A."/>
            <person name="Norbertczak H."/>
            <person name="Walker D."/>
            <person name="Simmonds M."/>
            <person name="White B."/>
            <person name="Bason N."/>
            <person name="Mungall K."/>
            <person name="Dougan G."/>
            <person name="Parkhill J."/>
        </authorList>
    </citation>
    <scope>NUCLEOTIDE SEQUENCE [LARGE SCALE GENOMIC DNA]</scope>
    <source>
        <strain>AKU_12601</strain>
    </source>
</reference>
<name>YBJL_SALPK</name>
<gene>
    <name evidence="1" type="primary">ybjL</name>
    <name type="ordered locus">SSPA1762</name>
</gene>
<proteinExistence type="inferred from homology"/>
<organism>
    <name type="scientific">Salmonella paratyphi A (strain AKU_12601)</name>
    <dbReference type="NCBI Taxonomy" id="554290"/>
    <lineage>
        <taxon>Bacteria</taxon>
        <taxon>Pseudomonadati</taxon>
        <taxon>Pseudomonadota</taxon>
        <taxon>Gammaproteobacteria</taxon>
        <taxon>Enterobacterales</taxon>
        <taxon>Enterobacteriaceae</taxon>
        <taxon>Salmonella</taxon>
    </lineage>
</organism>
<keyword id="KW-1003">Cell membrane</keyword>
<keyword id="KW-0472">Membrane</keyword>
<keyword id="KW-0677">Repeat</keyword>
<keyword id="KW-0812">Transmembrane</keyword>
<keyword id="KW-1133">Transmembrane helix</keyword>
<keyword id="KW-0813">Transport</keyword>